<dbReference type="EC" id="4.2.3.5" evidence="1"/>
<dbReference type="EMBL" id="CP000487">
    <property type="protein sequence ID" value="ABK82663.1"/>
    <property type="molecule type" value="Genomic_DNA"/>
</dbReference>
<dbReference type="RefSeq" id="WP_002850860.1">
    <property type="nucleotide sequence ID" value="NC_008599.1"/>
</dbReference>
<dbReference type="SMR" id="A0RRM6"/>
<dbReference type="GeneID" id="61065551"/>
<dbReference type="KEGG" id="cff:CFF8240_1741"/>
<dbReference type="eggNOG" id="COG0082">
    <property type="taxonomic scope" value="Bacteria"/>
</dbReference>
<dbReference type="HOGENOM" id="CLU_034547_0_2_7"/>
<dbReference type="UniPathway" id="UPA00053">
    <property type="reaction ID" value="UER00090"/>
</dbReference>
<dbReference type="Proteomes" id="UP000000760">
    <property type="component" value="Chromosome"/>
</dbReference>
<dbReference type="GO" id="GO:0005829">
    <property type="term" value="C:cytosol"/>
    <property type="evidence" value="ECO:0007669"/>
    <property type="project" value="TreeGrafter"/>
</dbReference>
<dbReference type="GO" id="GO:0004107">
    <property type="term" value="F:chorismate synthase activity"/>
    <property type="evidence" value="ECO:0007669"/>
    <property type="project" value="UniProtKB-UniRule"/>
</dbReference>
<dbReference type="GO" id="GO:0010181">
    <property type="term" value="F:FMN binding"/>
    <property type="evidence" value="ECO:0007669"/>
    <property type="project" value="TreeGrafter"/>
</dbReference>
<dbReference type="GO" id="GO:0008652">
    <property type="term" value="P:amino acid biosynthetic process"/>
    <property type="evidence" value="ECO:0007669"/>
    <property type="project" value="UniProtKB-KW"/>
</dbReference>
<dbReference type="GO" id="GO:0009073">
    <property type="term" value="P:aromatic amino acid family biosynthetic process"/>
    <property type="evidence" value="ECO:0007669"/>
    <property type="project" value="UniProtKB-KW"/>
</dbReference>
<dbReference type="GO" id="GO:0009423">
    <property type="term" value="P:chorismate biosynthetic process"/>
    <property type="evidence" value="ECO:0007669"/>
    <property type="project" value="UniProtKB-UniRule"/>
</dbReference>
<dbReference type="CDD" id="cd07304">
    <property type="entry name" value="Chorismate_synthase"/>
    <property type="match status" value="1"/>
</dbReference>
<dbReference type="Gene3D" id="3.60.150.10">
    <property type="entry name" value="Chorismate synthase AroC"/>
    <property type="match status" value="1"/>
</dbReference>
<dbReference type="HAMAP" id="MF_00300">
    <property type="entry name" value="Chorismate_synth"/>
    <property type="match status" value="1"/>
</dbReference>
<dbReference type="InterPro" id="IPR000453">
    <property type="entry name" value="Chorismate_synth"/>
</dbReference>
<dbReference type="InterPro" id="IPR035904">
    <property type="entry name" value="Chorismate_synth_AroC_sf"/>
</dbReference>
<dbReference type="InterPro" id="IPR020541">
    <property type="entry name" value="Chorismate_synthase_CS"/>
</dbReference>
<dbReference type="NCBIfam" id="TIGR00033">
    <property type="entry name" value="aroC"/>
    <property type="match status" value="1"/>
</dbReference>
<dbReference type="NCBIfam" id="NF003793">
    <property type="entry name" value="PRK05382.1"/>
    <property type="match status" value="1"/>
</dbReference>
<dbReference type="PANTHER" id="PTHR21085">
    <property type="entry name" value="CHORISMATE SYNTHASE"/>
    <property type="match status" value="1"/>
</dbReference>
<dbReference type="PANTHER" id="PTHR21085:SF0">
    <property type="entry name" value="CHORISMATE SYNTHASE"/>
    <property type="match status" value="1"/>
</dbReference>
<dbReference type="Pfam" id="PF01264">
    <property type="entry name" value="Chorismate_synt"/>
    <property type="match status" value="1"/>
</dbReference>
<dbReference type="PIRSF" id="PIRSF001456">
    <property type="entry name" value="Chorismate_synth"/>
    <property type="match status" value="1"/>
</dbReference>
<dbReference type="SUPFAM" id="SSF103263">
    <property type="entry name" value="Chorismate synthase, AroC"/>
    <property type="match status" value="1"/>
</dbReference>
<dbReference type="PROSITE" id="PS00787">
    <property type="entry name" value="CHORISMATE_SYNTHASE_1"/>
    <property type="match status" value="1"/>
</dbReference>
<dbReference type="PROSITE" id="PS00788">
    <property type="entry name" value="CHORISMATE_SYNTHASE_2"/>
    <property type="match status" value="1"/>
</dbReference>
<evidence type="ECO:0000255" key="1">
    <source>
        <dbReference type="HAMAP-Rule" id="MF_00300"/>
    </source>
</evidence>
<proteinExistence type="inferred from homology"/>
<gene>
    <name evidence="1" type="primary">aroC</name>
    <name type="ordered locus">CFF8240_1741</name>
</gene>
<reference key="1">
    <citation type="submission" date="2006-11" db="EMBL/GenBank/DDBJ databases">
        <title>Sequence of Campylobacter fetus subsp. fetus 82-40.</title>
        <authorList>
            <person name="Fouts D.E."/>
            <person name="Nelson K.E."/>
        </authorList>
    </citation>
    <scope>NUCLEOTIDE SEQUENCE [LARGE SCALE GENOMIC DNA]</scope>
    <source>
        <strain>82-40</strain>
    </source>
</reference>
<accession>A0RRM6</accession>
<name>AROC_CAMFF</name>
<organism>
    <name type="scientific">Campylobacter fetus subsp. fetus (strain 82-40)</name>
    <dbReference type="NCBI Taxonomy" id="360106"/>
    <lineage>
        <taxon>Bacteria</taxon>
        <taxon>Pseudomonadati</taxon>
        <taxon>Campylobacterota</taxon>
        <taxon>Epsilonproteobacteria</taxon>
        <taxon>Campylobacterales</taxon>
        <taxon>Campylobacteraceae</taxon>
        <taxon>Campylobacter</taxon>
    </lineage>
</organism>
<keyword id="KW-0028">Amino-acid biosynthesis</keyword>
<keyword id="KW-0057">Aromatic amino acid biosynthesis</keyword>
<keyword id="KW-0274">FAD</keyword>
<keyword id="KW-0285">Flavoprotein</keyword>
<keyword id="KW-0288">FMN</keyword>
<keyword id="KW-0456">Lyase</keyword>
<keyword id="KW-0521">NADP</keyword>
<feature type="chain" id="PRO_0000322395" description="Chorismate synthase">
    <location>
        <begin position="1"/>
        <end position="356"/>
    </location>
</feature>
<feature type="binding site" evidence="1">
    <location>
        <position position="46"/>
    </location>
    <ligand>
        <name>NADP(+)</name>
        <dbReference type="ChEBI" id="CHEBI:58349"/>
    </ligand>
</feature>
<feature type="binding site" evidence="1">
    <location>
        <begin position="122"/>
        <end position="124"/>
    </location>
    <ligand>
        <name>FMN</name>
        <dbReference type="ChEBI" id="CHEBI:58210"/>
    </ligand>
</feature>
<feature type="binding site" evidence="1">
    <location>
        <begin position="234"/>
        <end position="235"/>
    </location>
    <ligand>
        <name>FMN</name>
        <dbReference type="ChEBI" id="CHEBI:58210"/>
    </ligand>
</feature>
<feature type="binding site" evidence="1">
    <location>
        <position position="274"/>
    </location>
    <ligand>
        <name>FMN</name>
        <dbReference type="ChEBI" id="CHEBI:58210"/>
    </ligand>
</feature>
<feature type="binding site" evidence="1">
    <location>
        <begin position="289"/>
        <end position="293"/>
    </location>
    <ligand>
        <name>FMN</name>
        <dbReference type="ChEBI" id="CHEBI:58210"/>
    </ligand>
</feature>
<feature type="binding site" evidence="1">
    <location>
        <position position="315"/>
    </location>
    <ligand>
        <name>FMN</name>
        <dbReference type="ChEBI" id="CHEBI:58210"/>
    </ligand>
</feature>
<sequence>MNTFGSKLRLTTFGESHGKAIGGVLDGFPAGVAIDEEFLQSEMDKRKPGGKYATSRKEADEVEILSGIFEGFSTGTPIGFIIKNSNQHSKDYDSIKDLFRPGHADFTYFSKFGVRDHRGGGRSSARETAVRVAAGAFGAMMLKEFDIDIKSGVFSIGKLKSNKIDFEFASKSEIFMLDSDIEEDAKNLILDVKNSNDSVGAATLTIINGVPAGLGEVLYDKLDARLAAAMMGINGVKGVEIGLGSQASFILGSQNNDFMDKNGFMSNNAGGILGGISNGEPIMIKTYFKPTPSIFKDQPTINLNGDEVTCALRGRHDPCIGIRGSVVANAMARLVISDMLLLNASSKLSNLKKIYS</sequence>
<comment type="function">
    <text evidence="1">Catalyzes the anti-1,4-elimination of the C-3 phosphate and the C-6 proR hydrogen from 5-enolpyruvylshikimate-3-phosphate (EPSP) to yield chorismate, which is the branch point compound that serves as the starting substrate for the three terminal pathways of aromatic amino acid biosynthesis. This reaction introduces a second double bond into the aromatic ring system.</text>
</comment>
<comment type="catalytic activity">
    <reaction evidence="1">
        <text>5-O-(1-carboxyvinyl)-3-phosphoshikimate = chorismate + phosphate</text>
        <dbReference type="Rhea" id="RHEA:21020"/>
        <dbReference type="ChEBI" id="CHEBI:29748"/>
        <dbReference type="ChEBI" id="CHEBI:43474"/>
        <dbReference type="ChEBI" id="CHEBI:57701"/>
        <dbReference type="EC" id="4.2.3.5"/>
    </reaction>
</comment>
<comment type="cofactor">
    <cofactor evidence="1">
        <name>FMNH2</name>
        <dbReference type="ChEBI" id="CHEBI:57618"/>
    </cofactor>
    <text evidence="1">Reduced FMN (FMNH(2)).</text>
</comment>
<comment type="pathway">
    <text evidence="1">Metabolic intermediate biosynthesis; chorismate biosynthesis; chorismate from D-erythrose 4-phosphate and phosphoenolpyruvate: step 7/7.</text>
</comment>
<comment type="subunit">
    <text evidence="1">Homotetramer.</text>
</comment>
<comment type="similarity">
    <text evidence="1">Belongs to the chorismate synthase family.</text>
</comment>
<protein>
    <recommendedName>
        <fullName evidence="1">Chorismate synthase</fullName>
        <shortName evidence="1">CS</shortName>
        <ecNumber evidence="1">4.2.3.5</ecNumber>
    </recommendedName>
    <alternativeName>
        <fullName evidence="1">5-enolpyruvylshikimate-3-phosphate phospholyase</fullName>
    </alternativeName>
</protein>